<organism evidence="3">
    <name type="scientific">Cruziohyla calcarifer</name>
    <name type="common">Splendid leaf frog</name>
    <name type="synonym">Agalychnis calcarifer</name>
    <dbReference type="NCBI Taxonomy" id="318249"/>
    <lineage>
        <taxon>Eukaryota</taxon>
        <taxon>Metazoa</taxon>
        <taxon>Chordata</taxon>
        <taxon>Craniata</taxon>
        <taxon>Vertebrata</taxon>
        <taxon>Euteleostomi</taxon>
        <taxon>Amphibia</taxon>
        <taxon>Batrachia</taxon>
        <taxon>Anura</taxon>
        <taxon>Neobatrachia</taxon>
        <taxon>Hyloidea</taxon>
        <taxon>Hylidae</taxon>
        <taxon>Phyllomedusinae</taxon>
        <taxon>Cruziohyla</taxon>
    </lineage>
</organism>
<accession>C0HK09</accession>
<dbReference type="GO" id="GO:0005576">
    <property type="term" value="C:extracellular region"/>
    <property type="evidence" value="ECO:0000314"/>
    <property type="project" value="UniProtKB"/>
</dbReference>
<dbReference type="GO" id="GO:0006952">
    <property type="term" value="P:defense response"/>
    <property type="evidence" value="ECO:0007669"/>
    <property type="project" value="UniProtKB-KW"/>
</dbReference>
<evidence type="ECO:0000250" key="1">
    <source>
        <dbReference type="UniProtKB" id="A0A193H362"/>
    </source>
</evidence>
<evidence type="ECO:0000269" key="2">
    <source>
    </source>
</evidence>
<evidence type="ECO:0000303" key="3">
    <source>
    </source>
</evidence>
<evidence type="ECO:0000305" key="4"/>
<evidence type="ECO:0000305" key="5">
    <source>
    </source>
</evidence>
<protein>
    <recommendedName>
        <fullName evidence="3">Cruzioseptin-13</fullName>
        <shortName evidence="3">CZS-13</shortName>
    </recommendedName>
</protein>
<comment type="function">
    <text evidence="1">Has antimicrobial activity.</text>
</comment>
<comment type="subcellular location">
    <subcellularLocation>
        <location evidence="2">Secreted</location>
    </subcellularLocation>
</comment>
<comment type="tissue specificity">
    <text evidence="5">Expressed by the skin glands.</text>
</comment>
<comment type="mass spectrometry" mass="2519.39" method="Electrospray" evidence="2"/>
<comment type="similarity">
    <text evidence="4">Belongs to the frog skin active peptide (FSAP) family. Cruzioseptin subfamily.</text>
</comment>
<proteinExistence type="evidence at protein level"/>
<reference evidence="4" key="1">
    <citation type="journal article" date="2016" name="J. Proteomics">
        <title>Peptidomic approach identifies cruzioseptins, a new family of potent antimicrobial peptides in the splendid leaf frog, Cruziohyla calcarifer.</title>
        <authorList>
            <person name="Proano-Bolanos C."/>
            <person name="Zhou M."/>
            <person name="Wang L."/>
            <person name="Coloma L.A."/>
            <person name="Chen T."/>
            <person name="Shaw C."/>
        </authorList>
    </citation>
    <scope>PROTEIN SEQUENCE</scope>
    <scope>SUBCELLULAR LOCATION</scope>
    <scope>MASS SPECTROMETRY</scope>
    <scope>AMIDATION AT ASN-25</scope>
    <scope>IDENTIFICATION BY MASS SPECTROMETRY</scope>
    <source>
        <tissue evidence="3">Skin secretion</tissue>
    </source>
</reference>
<keyword id="KW-0027">Amidation</keyword>
<keyword id="KW-0878">Amphibian defense peptide</keyword>
<keyword id="KW-0929">Antimicrobial</keyword>
<keyword id="KW-0903">Direct protein sequencing</keyword>
<keyword id="KW-0964">Secreted</keyword>
<name>CZS13_CRUCA</name>
<sequence length="25" mass="2521">GFLDVVHVGKAVGKAALNAVNDLVN</sequence>
<feature type="peptide" id="PRO_0000439486" description="Cruzioseptin-13" evidence="2">
    <location>
        <begin position="1"/>
        <end position="25"/>
    </location>
</feature>
<feature type="modified residue" description="Asparagine amide" evidence="5">
    <location>
        <position position="25"/>
    </location>
</feature>